<organism>
    <name type="scientific">Ruegeria sp. (strain TM1040)</name>
    <name type="common">Silicibacter sp.</name>
    <dbReference type="NCBI Taxonomy" id="292414"/>
    <lineage>
        <taxon>Bacteria</taxon>
        <taxon>Pseudomonadati</taxon>
        <taxon>Pseudomonadota</taxon>
        <taxon>Alphaproteobacteria</taxon>
        <taxon>Rhodobacterales</taxon>
        <taxon>Roseobacteraceae</taxon>
        <taxon>Ruegeria</taxon>
    </lineage>
</organism>
<comment type="function">
    <text evidence="1">Part of the ABC transporter complex UgpBAEC involved in sn-glycerol-3-phosphate (G3P) import. Responsible for energy coupling to the transport system.</text>
</comment>
<comment type="catalytic activity">
    <reaction evidence="1">
        <text>sn-glycerol 3-phosphate(out) + ATP + H2O = sn-glycerol 3-phosphate(in) + ADP + phosphate + H(+)</text>
        <dbReference type="Rhea" id="RHEA:21668"/>
        <dbReference type="ChEBI" id="CHEBI:15377"/>
        <dbReference type="ChEBI" id="CHEBI:15378"/>
        <dbReference type="ChEBI" id="CHEBI:30616"/>
        <dbReference type="ChEBI" id="CHEBI:43474"/>
        <dbReference type="ChEBI" id="CHEBI:57597"/>
        <dbReference type="ChEBI" id="CHEBI:456216"/>
        <dbReference type="EC" id="7.6.2.10"/>
    </reaction>
</comment>
<comment type="subunit">
    <text evidence="1">The complex is composed of two ATP-binding proteins (UgpC), two transmembrane proteins (UgpA and UgpE) and a solute-binding protein (UgpB).</text>
</comment>
<comment type="subcellular location">
    <subcellularLocation>
        <location evidence="1">Cell inner membrane</location>
        <topology evidence="1">Peripheral membrane protein</topology>
    </subcellularLocation>
</comment>
<comment type="similarity">
    <text evidence="1">Belongs to the ABC transporter superfamily. sn-glycerol-3-phosphate importer (TC 3.A.1.1.3) family.</text>
</comment>
<sequence>MASITLKDLVKSYGDTEVLHHIDGEINDGEFIVIVGPSGCGKSTLLRMIAGLETVTSGDIKICDRVVNDLEPANRDIAMVFQNYALYPHMSVRENMGYGLKIRGNSKADINRRVEEAAEILEIGQYLDRKPRQLSGGQRQRVAMGRAIVRDPQVFLFDEPLSNLDAKLRVQMRLEIRKLQQRLGVTSIYVTHDQVEAMTLGDRLMVLNGGYVEQFGTPIELYDRPATLFVAGFIGSPSMNFLPAEIDAGMVTLENGARLAGGGSAAGKVTLGLRPEHLVADDNGPVEVNVQLCEQLGAITLLHGHLNGTDTECVASMPGHVTAAPGTLMRFSIAPENLHMFDPQTGKRVAE</sequence>
<feature type="chain" id="PRO_0000289785" description="sn-glycerol-3-phosphate import ATP-binding protein UgpC">
    <location>
        <begin position="1"/>
        <end position="351"/>
    </location>
</feature>
<feature type="domain" description="ABC transporter" evidence="1">
    <location>
        <begin position="4"/>
        <end position="234"/>
    </location>
</feature>
<feature type="binding site" evidence="1">
    <location>
        <begin position="36"/>
        <end position="43"/>
    </location>
    <ligand>
        <name>ATP</name>
        <dbReference type="ChEBI" id="CHEBI:30616"/>
    </ligand>
</feature>
<name>UGPC_RUEST</name>
<evidence type="ECO:0000255" key="1">
    <source>
        <dbReference type="HAMAP-Rule" id="MF_01727"/>
    </source>
</evidence>
<reference key="1">
    <citation type="submission" date="2006-05" db="EMBL/GenBank/DDBJ databases">
        <title>Complete sequence of chromosome of Silicibacter sp. TM1040.</title>
        <authorList>
            <consortium name="US DOE Joint Genome Institute"/>
            <person name="Copeland A."/>
            <person name="Lucas S."/>
            <person name="Lapidus A."/>
            <person name="Barry K."/>
            <person name="Detter J.C."/>
            <person name="Glavina del Rio T."/>
            <person name="Hammon N."/>
            <person name="Israni S."/>
            <person name="Dalin E."/>
            <person name="Tice H."/>
            <person name="Pitluck S."/>
            <person name="Brettin T."/>
            <person name="Bruce D."/>
            <person name="Han C."/>
            <person name="Tapia R."/>
            <person name="Goodwin L."/>
            <person name="Thompson L.S."/>
            <person name="Gilna P."/>
            <person name="Schmutz J."/>
            <person name="Larimer F."/>
            <person name="Land M."/>
            <person name="Hauser L."/>
            <person name="Kyrpides N."/>
            <person name="Kim E."/>
            <person name="Belas R."/>
            <person name="Moran M.A."/>
            <person name="Buchan A."/>
            <person name="Gonzalez J.M."/>
            <person name="Schell M.A."/>
            <person name="Sun F."/>
            <person name="Richardson P."/>
        </authorList>
    </citation>
    <scope>NUCLEOTIDE SEQUENCE [LARGE SCALE GENOMIC DNA]</scope>
    <source>
        <strain>TM1040</strain>
    </source>
</reference>
<protein>
    <recommendedName>
        <fullName evidence="1">sn-glycerol-3-phosphate import ATP-binding protein UgpC</fullName>
        <ecNumber evidence="1">7.6.2.10</ecNumber>
    </recommendedName>
</protein>
<dbReference type="EC" id="7.6.2.10" evidence="1"/>
<dbReference type="EMBL" id="CP000377">
    <property type="protein sequence ID" value="ABF63585.1"/>
    <property type="molecule type" value="Genomic_DNA"/>
</dbReference>
<dbReference type="RefSeq" id="WP_011538197.1">
    <property type="nucleotide sequence ID" value="NC_008044.1"/>
</dbReference>
<dbReference type="SMR" id="Q1GID1"/>
<dbReference type="STRING" id="292414.TM1040_0852"/>
<dbReference type="KEGG" id="sit:TM1040_0852"/>
<dbReference type="eggNOG" id="COG3842">
    <property type="taxonomic scope" value="Bacteria"/>
</dbReference>
<dbReference type="HOGENOM" id="CLU_000604_1_1_5"/>
<dbReference type="OrthoDB" id="8188565at2"/>
<dbReference type="Proteomes" id="UP000000636">
    <property type="component" value="Chromosome"/>
</dbReference>
<dbReference type="GO" id="GO:0055052">
    <property type="term" value="C:ATP-binding cassette (ABC) transporter complex, substrate-binding subunit-containing"/>
    <property type="evidence" value="ECO:0007669"/>
    <property type="project" value="TreeGrafter"/>
</dbReference>
<dbReference type="GO" id="GO:0015430">
    <property type="term" value="F:ABC-type glycerol-3-phosphate transporter activity"/>
    <property type="evidence" value="ECO:0007669"/>
    <property type="project" value="UniProtKB-EC"/>
</dbReference>
<dbReference type="GO" id="GO:0005524">
    <property type="term" value="F:ATP binding"/>
    <property type="evidence" value="ECO:0007669"/>
    <property type="project" value="UniProtKB-KW"/>
</dbReference>
<dbReference type="GO" id="GO:0016887">
    <property type="term" value="F:ATP hydrolysis activity"/>
    <property type="evidence" value="ECO:0007669"/>
    <property type="project" value="InterPro"/>
</dbReference>
<dbReference type="GO" id="GO:0008643">
    <property type="term" value="P:carbohydrate transport"/>
    <property type="evidence" value="ECO:0007669"/>
    <property type="project" value="InterPro"/>
</dbReference>
<dbReference type="GO" id="GO:0001407">
    <property type="term" value="P:glycerophosphodiester transmembrane transport"/>
    <property type="evidence" value="ECO:0007669"/>
    <property type="project" value="TreeGrafter"/>
</dbReference>
<dbReference type="CDD" id="cd03301">
    <property type="entry name" value="ABC_MalK_N"/>
    <property type="match status" value="1"/>
</dbReference>
<dbReference type="FunFam" id="3.40.50.300:FF:000042">
    <property type="entry name" value="Maltose/maltodextrin ABC transporter, ATP-binding protein"/>
    <property type="match status" value="1"/>
</dbReference>
<dbReference type="Gene3D" id="2.40.50.100">
    <property type="match status" value="1"/>
</dbReference>
<dbReference type="Gene3D" id="2.40.50.140">
    <property type="entry name" value="Nucleic acid-binding proteins"/>
    <property type="match status" value="1"/>
</dbReference>
<dbReference type="Gene3D" id="3.40.50.300">
    <property type="entry name" value="P-loop containing nucleotide triphosphate hydrolases"/>
    <property type="match status" value="1"/>
</dbReference>
<dbReference type="InterPro" id="IPR003593">
    <property type="entry name" value="AAA+_ATPase"/>
</dbReference>
<dbReference type="InterPro" id="IPR003439">
    <property type="entry name" value="ABC_transporter-like_ATP-bd"/>
</dbReference>
<dbReference type="InterPro" id="IPR017871">
    <property type="entry name" value="ABC_transporter-like_CS"/>
</dbReference>
<dbReference type="InterPro" id="IPR015855">
    <property type="entry name" value="ABC_transpr_MalK-like"/>
</dbReference>
<dbReference type="InterPro" id="IPR047641">
    <property type="entry name" value="ABC_transpr_MalK/UgpC-like"/>
</dbReference>
<dbReference type="InterPro" id="IPR008995">
    <property type="entry name" value="Mo/tungstate-bd_C_term_dom"/>
</dbReference>
<dbReference type="InterPro" id="IPR012340">
    <property type="entry name" value="NA-bd_OB-fold"/>
</dbReference>
<dbReference type="InterPro" id="IPR040582">
    <property type="entry name" value="OB_MalK-like"/>
</dbReference>
<dbReference type="InterPro" id="IPR027417">
    <property type="entry name" value="P-loop_NTPase"/>
</dbReference>
<dbReference type="NCBIfam" id="NF008653">
    <property type="entry name" value="PRK11650.1"/>
    <property type="match status" value="1"/>
</dbReference>
<dbReference type="PANTHER" id="PTHR43875">
    <property type="entry name" value="MALTODEXTRIN IMPORT ATP-BINDING PROTEIN MSMX"/>
    <property type="match status" value="1"/>
</dbReference>
<dbReference type="PANTHER" id="PTHR43875:SF12">
    <property type="entry name" value="SN-GLYCEROL-3-PHOSPHATE IMPORT ATP-BINDING PROTEIN UGPC"/>
    <property type="match status" value="1"/>
</dbReference>
<dbReference type="Pfam" id="PF00005">
    <property type="entry name" value="ABC_tran"/>
    <property type="match status" value="1"/>
</dbReference>
<dbReference type="Pfam" id="PF17912">
    <property type="entry name" value="OB_MalK"/>
    <property type="match status" value="1"/>
</dbReference>
<dbReference type="SMART" id="SM00382">
    <property type="entry name" value="AAA"/>
    <property type="match status" value="1"/>
</dbReference>
<dbReference type="SUPFAM" id="SSF50331">
    <property type="entry name" value="MOP-like"/>
    <property type="match status" value="1"/>
</dbReference>
<dbReference type="SUPFAM" id="SSF52540">
    <property type="entry name" value="P-loop containing nucleoside triphosphate hydrolases"/>
    <property type="match status" value="1"/>
</dbReference>
<dbReference type="PROSITE" id="PS00211">
    <property type="entry name" value="ABC_TRANSPORTER_1"/>
    <property type="match status" value="1"/>
</dbReference>
<dbReference type="PROSITE" id="PS50893">
    <property type="entry name" value="ABC_TRANSPORTER_2"/>
    <property type="match status" value="1"/>
</dbReference>
<dbReference type="PROSITE" id="PS51315">
    <property type="entry name" value="UGPC"/>
    <property type="match status" value="1"/>
</dbReference>
<accession>Q1GID1</accession>
<keyword id="KW-0067">ATP-binding</keyword>
<keyword id="KW-0997">Cell inner membrane</keyword>
<keyword id="KW-1003">Cell membrane</keyword>
<keyword id="KW-0472">Membrane</keyword>
<keyword id="KW-0547">Nucleotide-binding</keyword>
<keyword id="KW-1185">Reference proteome</keyword>
<keyword id="KW-0762">Sugar transport</keyword>
<keyword id="KW-1278">Translocase</keyword>
<keyword id="KW-0813">Transport</keyword>
<gene>
    <name evidence="1" type="primary">ugpC</name>
    <name type="ordered locus">TM1040_0852</name>
</gene>
<proteinExistence type="inferred from homology"/>